<keyword id="KW-0067">ATP-binding</keyword>
<keyword id="KW-0119">Carbohydrate metabolism</keyword>
<keyword id="KW-0294">Fucose metabolism</keyword>
<keyword id="KW-0418">Kinase</keyword>
<keyword id="KW-0547">Nucleotide-binding</keyword>
<keyword id="KW-0808">Transferase</keyword>
<evidence type="ECO:0000255" key="1">
    <source>
        <dbReference type="HAMAP-Rule" id="MF_00986"/>
    </source>
</evidence>
<sequence>MKQDVILVLDCGATNVRAIAVDRQGKIVARASTANASDIAAENSAWHQWSLDAILQRFADCCRSLSSALSECVVRGITVTTFGVDGALVDAQGKLLYPVISWKCPRTAAVMETIERFISPRQLQTLSGVGAFSFNTLYKLVWLKENHPRLLEQAHCWLFISSLINHRLTGEFTTDITMAGTSQLLDIHQRDFSPEILQATGLARRLFPRIVEAGAPIGTLQTDAARLLGLPAGVPVISAEHDTQFALFGAGAQQGEPVLSSGTWEILMVRSGQVDTSLLSQYPGSTCELDSQSGLYNPGMQWLASGVLEWVRKLLWTPETPWQTLIDEARAIPAGAEGVRMQCDLLACQNAGWQGVTLNTTRGHFYRAALEGLTAQLQRNLRTLEKIGHFNATELLLVGGGSRNALWNQIKANQLDIPIKVLDDAETTVAGAAMFGWYGVGEFSSPEQARAQVNYQYRYFWPQTEPEIIEGV</sequence>
<comment type="function">
    <text evidence="1">Catalyzes the phosphorylation of L-fuculose.</text>
</comment>
<comment type="catalytic activity">
    <reaction evidence="1">
        <text>L-fuculose + ATP = L-fuculose 1-phosphate + ADP + H(+)</text>
        <dbReference type="Rhea" id="RHEA:12376"/>
        <dbReference type="ChEBI" id="CHEBI:15378"/>
        <dbReference type="ChEBI" id="CHEBI:17617"/>
        <dbReference type="ChEBI" id="CHEBI:30616"/>
        <dbReference type="ChEBI" id="CHEBI:57846"/>
        <dbReference type="ChEBI" id="CHEBI:456216"/>
        <dbReference type="EC" id="2.7.1.51"/>
    </reaction>
</comment>
<comment type="cofactor">
    <cofactor evidence="1">
        <name>a divalent metal cation</name>
        <dbReference type="ChEBI" id="CHEBI:60240"/>
    </cofactor>
</comment>
<comment type="pathway">
    <text evidence="1">Carbohydrate degradation; L-fucose degradation; L-lactaldehyde and glycerone phosphate from L-fucose: step 2/3.</text>
</comment>
<comment type="similarity">
    <text evidence="1">Belongs to the FGGY kinase family.</text>
</comment>
<protein>
    <recommendedName>
        <fullName evidence="1">L-fuculokinase</fullName>
        <ecNumber evidence="1">2.7.1.51</ecNumber>
    </recommendedName>
    <alternativeName>
        <fullName evidence="1">L-fuculose kinase</fullName>
    </alternativeName>
</protein>
<accession>Q8Z428</accession>
<organism>
    <name type="scientific">Salmonella typhi</name>
    <dbReference type="NCBI Taxonomy" id="90370"/>
    <lineage>
        <taxon>Bacteria</taxon>
        <taxon>Pseudomonadati</taxon>
        <taxon>Pseudomonadota</taxon>
        <taxon>Gammaproteobacteria</taxon>
        <taxon>Enterobacterales</taxon>
        <taxon>Enterobacteriaceae</taxon>
        <taxon>Salmonella</taxon>
    </lineage>
</organism>
<feature type="chain" id="PRO_0000059426" description="L-fuculokinase">
    <location>
        <begin position="1"/>
        <end position="472"/>
    </location>
</feature>
<proteinExistence type="inferred from homology"/>
<reference key="1">
    <citation type="journal article" date="2001" name="Nature">
        <title>Complete genome sequence of a multiple drug resistant Salmonella enterica serovar Typhi CT18.</title>
        <authorList>
            <person name="Parkhill J."/>
            <person name="Dougan G."/>
            <person name="James K.D."/>
            <person name="Thomson N.R."/>
            <person name="Pickard D."/>
            <person name="Wain J."/>
            <person name="Churcher C.M."/>
            <person name="Mungall K.L."/>
            <person name="Bentley S.D."/>
            <person name="Holden M.T.G."/>
            <person name="Sebaihia M."/>
            <person name="Baker S."/>
            <person name="Basham D."/>
            <person name="Brooks K."/>
            <person name="Chillingworth T."/>
            <person name="Connerton P."/>
            <person name="Cronin A."/>
            <person name="Davis P."/>
            <person name="Davies R.M."/>
            <person name="Dowd L."/>
            <person name="White N."/>
            <person name="Farrar J."/>
            <person name="Feltwell T."/>
            <person name="Hamlin N."/>
            <person name="Haque A."/>
            <person name="Hien T.T."/>
            <person name="Holroyd S."/>
            <person name="Jagels K."/>
            <person name="Krogh A."/>
            <person name="Larsen T.S."/>
            <person name="Leather S."/>
            <person name="Moule S."/>
            <person name="O'Gaora P."/>
            <person name="Parry C."/>
            <person name="Quail M.A."/>
            <person name="Rutherford K.M."/>
            <person name="Simmonds M."/>
            <person name="Skelton J."/>
            <person name="Stevens K."/>
            <person name="Whitehead S."/>
            <person name="Barrell B.G."/>
        </authorList>
    </citation>
    <scope>NUCLEOTIDE SEQUENCE [LARGE SCALE GENOMIC DNA]</scope>
    <source>
        <strain>CT18</strain>
    </source>
</reference>
<reference key="2">
    <citation type="journal article" date="2003" name="J. Bacteriol.">
        <title>Comparative genomics of Salmonella enterica serovar Typhi strains Ty2 and CT18.</title>
        <authorList>
            <person name="Deng W."/>
            <person name="Liou S.-R."/>
            <person name="Plunkett G. III"/>
            <person name="Mayhew G.F."/>
            <person name="Rose D.J."/>
            <person name="Burland V."/>
            <person name="Kodoyianni V."/>
            <person name="Schwartz D.C."/>
            <person name="Blattner F.R."/>
        </authorList>
    </citation>
    <scope>NUCLEOTIDE SEQUENCE [LARGE SCALE GENOMIC DNA]</scope>
    <source>
        <strain>ATCC 700931 / Ty2</strain>
    </source>
</reference>
<dbReference type="EC" id="2.7.1.51" evidence="1"/>
<dbReference type="EMBL" id="AL513382">
    <property type="protein sequence ID" value="CAD02803.1"/>
    <property type="molecule type" value="Genomic_DNA"/>
</dbReference>
<dbReference type="EMBL" id="AE014613">
    <property type="protein sequence ID" value="AAO70441.1"/>
    <property type="molecule type" value="Genomic_DNA"/>
</dbReference>
<dbReference type="RefSeq" id="NP_457372.1">
    <property type="nucleotide sequence ID" value="NC_003198.1"/>
</dbReference>
<dbReference type="RefSeq" id="WP_001763972.1">
    <property type="nucleotide sequence ID" value="NZ_WSUR01000005.1"/>
</dbReference>
<dbReference type="SMR" id="Q8Z428"/>
<dbReference type="STRING" id="220341.gene:17587001"/>
<dbReference type="KEGG" id="stt:t2885"/>
<dbReference type="KEGG" id="sty:STY3117"/>
<dbReference type="PATRIC" id="fig|220341.7.peg.3172"/>
<dbReference type="eggNOG" id="COG1070">
    <property type="taxonomic scope" value="Bacteria"/>
</dbReference>
<dbReference type="HOGENOM" id="CLU_009281_11_2_6"/>
<dbReference type="OMA" id="EGEHVAM"/>
<dbReference type="OrthoDB" id="9805576at2"/>
<dbReference type="UniPathway" id="UPA00563">
    <property type="reaction ID" value="UER00625"/>
</dbReference>
<dbReference type="Proteomes" id="UP000000541">
    <property type="component" value="Chromosome"/>
</dbReference>
<dbReference type="Proteomes" id="UP000002670">
    <property type="component" value="Chromosome"/>
</dbReference>
<dbReference type="GO" id="GO:0005524">
    <property type="term" value="F:ATP binding"/>
    <property type="evidence" value="ECO:0007669"/>
    <property type="project" value="UniProtKB-UniRule"/>
</dbReference>
<dbReference type="GO" id="GO:0008737">
    <property type="term" value="F:L-fuculokinase activity"/>
    <property type="evidence" value="ECO:0007669"/>
    <property type="project" value="UniProtKB-UniRule"/>
</dbReference>
<dbReference type="GO" id="GO:0042355">
    <property type="term" value="P:L-fucose catabolic process"/>
    <property type="evidence" value="ECO:0007669"/>
    <property type="project" value="UniProtKB-UniRule"/>
</dbReference>
<dbReference type="CDD" id="cd07773">
    <property type="entry name" value="ASKHA_NBD_FGGY_FK"/>
    <property type="match status" value="1"/>
</dbReference>
<dbReference type="FunFam" id="3.30.420.40:FF:000159">
    <property type="entry name" value="L-fuculokinase"/>
    <property type="match status" value="1"/>
</dbReference>
<dbReference type="FunFam" id="3.30.420.40:FF:000161">
    <property type="entry name" value="L-fuculokinase"/>
    <property type="match status" value="1"/>
</dbReference>
<dbReference type="Gene3D" id="3.30.420.40">
    <property type="match status" value="2"/>
</dbReference>
<dbReference type="HAMAP" id="MF_00986">
    <property type="entry name" value="Fuculokinase"/>
    <property type="match status" value="1"/>
</dbReference>
<dbReference type="InterPro" id="IPR043129">
    <property type="entry name" value="ATPase_NBD"/>
</dbReference>
<dbReference type="InterPro" id="IPR000577">
    <property type="entry name" value="Carb_kinase_FGGY"/>
</dbReference>
<dbReference type="InterPro" id="IPR018483">
    <property type="entry name" value="Carb_kinase_FGGY_CS"/>
</dbReference>
<dbReference type="InterPro" id="IPR018485">
    <property type="entry name" value="FGGY_C"/>
</dbReference>
<dbReference type="InterPro" id="IPR050406">
    <property type="entry name" value="FGGY_Carb_Kinase"/>
</dbReference>
<dbReference type="InterPro" id="IPR018484">
    <property type="entry name" value="FGGY_N"/>
</dbReference>
<dbReference type="InterPro" id="IPR013450">
    <property type="entry name" value="Fuculokinase"/>
</dbReference>
<dbReference type="NCBIfam" id="TIGR02628">
    <property type="entry name" value="fuculo_kin_coli"/>
    <property type="match status" value="1"/>
</dbReference>
<dbReference type="PANTHER" id="PTHR43095">
    <property type="entry name" value="SUGAR KINASE"/>
    <property type="match status" value="1"/>
</dbReference>
<dbReference type="PANTHER" id="PTHR43095:SF5">
    <property type="entry name" value="XYLULOSE KINASE"/>
    <property type="match status" value="1"/>
</dbReference>
<dbReference type="Pfam" id="PF02782">
    <property type="entry name" value="FGGY_C"/>
    <property type="match status" value="1"/>
</dbReference>
<dbReference type="Pfam" id="PF00370">
    <property type="entry name" value="FGGY_N"/>
    <property type="match status" value="1"/>
</dbReference>
<dbReference type="PIRSF" id="PIRSF000538">
    <property type="entry name" value="GlpK"/>
    <property type="match status" value="1"/>
</dbReference>
<dbReference type="SUPFAM" id="SSF53067">
    <property type="entry name" value="Actin-like ATPase domain"/>
    <property type="match status" value="2"/>
</dbReference>
<dbReference type="PROSITE" id="PS00933">
    <property type="entry name" value="FGGY_KINASES_1"/>
    <property type="match status" value="1"/>
</dbReference>
<dbReference type="PROSITE" id="PS00445">
    <property type="entry name" value="FGGY_KINASES_2"/>
    <property type="match status" value="1"/>
</dbReference>
<name>FUCK_SALTI</name>
<gene>
    <name evidence="1" type="primary">fucK</name>
    <name type="ordered locus">STY3117</name>
    <name type="ordered locus">t2885</name>
</gene>